<reference key="1">
    <citation type="journal article" date="2010" name="Genome Biol. Evol.">
        <title>Continuing evolution of Burkholderia mallei through genome reduction and large-scale rearrangements.</title>
        <authorList>
            <person name="Losada L."/>
            <person name="Ronning C.M."/>
            <person name="DeShazer D."/>
            <person name="Woods D."/>
            <person name="Fedorova N."/>
            <person name="Kim H.S."/>
            <person name="Shabalina S.A."/>
            <person name="Pearson T.R."/>
            <person name="Brinkac L."/>
            <person name="Tan P."/>
            <person name="Nandi T."/>
            <person name="Crabtree J."/>
            <person name="Badger J."/>
            <person name="Beckstrom-Sternberg S."/>
            <person name="Saqib M."/>
            <person name="Schutzer S.E."/>
            <person name="Keim P."/>
            <person name="Nierman W.C."/>
        </authorList>
    </citation>
    <scope>NUCLEOTIDE SEQUENCE [LARGE SCALE GENOMIC DNA]</scope>
    <source>
        <strain>NCTC 10229</strain>
    </source>
</reference>
<keyword id="KW-0997">Cell inner membrane</keyword>
<keyword id="KW-1003">Cell membrane</keyword>
<keyword id="KW-0472">Membrane</keyword>
<keyword id="KW-0808">Transferase</keyword>
<keyword id="KW-0812">Transmembrane</keyword>
<keyword id="KW-1133">Transmembrane helix</keyword>
<name>LGT_BURM9</name>
<sequence>MIIHPNFDPVAIHLGPLAVRWYGLMYLVGFILAIVVGRLRLKLPHVAAQGWSAKDIDDMMFYGVLGVVLGGRLGYVLFYKAGYYFSHPLDIFRVWEGGMSFHGGFLGVTLAMALFAWQRKRHWLEVTDFVAPMVPTGLAAGRLGNFINGELWGRVTSPDAPWAMLFPGASRDDAAWLAAHQDIAAKWNLNEVFLSHQMLPRHPSQLYEIALEGIALFFVLWFFSRKPRPMGAISALFLIGYGAARFTVEFAREPDDFLGLLTFGLSMGQWLSLPMIVAGVLMMIWAYRRGGVAKQA</sequence>
<proteinExistence type="inferred from homology"/>
<evidence type="ECO:0000255" key="1">
    <source>
        <dbReference type="HAMAP-Rule" id="MF_01147"/>
    </source>
</evidence>
<comment type="function">
    <text evidence="1">Catalyzes the transfer of the diacylglyceryl group from phosphatidylglycerol to the sulfhydryl group of the N-terminal cysteine of a prolipoprotein, the first step in the formation of mature lipoproteins.</text>
</comment>
<comment type="catalytic activity">
    <reaction evidence="1">
        <text>L-cysteinyl-[prolipoprotein] + a 1,2-diacyl-sn-glycero-3-phospho-(1'-sn-glycerol) = an S-1,2-diacyl-sn-glyceryl-L-cysteinyl-[prolipoprotein] + sn-glycerol 1-phosphate + H(+)</text>
        <dbReference type="Rhea" id="RHEA:56712"/>
        <dbReference type="Rhea" id="RHEA-COMP:14679"/>
        <dbReference type="Rhea" id="RHEA-COMP:14680"/>
        <dbReference type="ChEBI" id="CHEBI:15378"/>
        <dbReference type="ChEBI" id="CHEBI:29950"/>
        <dbReference type="ChEBI" id="CHEBI:57685"/>
        <dbReference type="ChEBI" id="CHEBI:64716"/>
        <dbReference type="ChEBI" id="CHEBI:140658"/>
        <dbReference type="EC" id="2.5.1.145"/>
    </reaction>
</comment>
<comment type="pathway">
    <text evidence="1">Protein modification; lipoprotein biosynthesis (diacylglyceryl transfer).</text>
</comment>
<comment type="subcellular location">
    <subcellularLocation>
        <location evidence="1">Cell inner membrane</location>
        <topology evidence="1">Multi-pass membrane protein</topology>
    </subcellularLocation>
</comment>
<comment type="similarity">
    <text evidence="1">Belongs to the Lgt family.</text>
</comment>
<feature type="chain" id="PRO_1000053400" description="Phosphatidylglycerol--prolipoprotein diacylglyceryl transferase">
    <location>
        <begin position="1"/>
        <end position="296"/>
    </location>
</feature>
<feature type="transmembrane region" description="Helical" evidence="1">
    <location>
        <begin position="17"/>
        <end position="37"/>
    </location>
</feature>
<feature type="transmembrane region" description="Helical" evidence="1">
    <location>
        <begin position="59"/>
        <end position="79"/>
    </location>
</feature>
<feature type="transmembrane region" description="Helical" evidence="1">
    <location>
        <begin position="97"/>
        <end position="117"/>
    </location>
</feature>
<feature type="transmembrane region" description="Helical" evidence="1">
    <location>
        <begin position="230"/>
        <end position="250"/>
    </location>
</feature>
<feature type="transmembrane region" description="Helical" evidence="1">
    <location>
        <begin position="265"/>
        <end position="285"/>
    </location>
</feature>
<feature type="binding site" evidence="1">
    <location>
        <position position="142"/>
    </location>
    <ligand>
        <name>a 1,2-diacyl-sn-glycero-3-phospho-(1'-sn-glycerol)</name>
        <dbReference type="ChEBI" id="CHEBI:64716"/>
    </ligand>
</feature>
<dbReference type="EC" id="2.5.1.145" evidence="1"/>
<dbReference type="EMBL" id="CP000546">
    <property type="protein sequence ID" value="ABN01929.1"/>
    <property type="molecule type" value="Genomic_DNA"/>
</dbReference>
<dbReference type="RefSeq" id="WP_004191241.1">
    <property type="nucleotide sequence ID" value="NC_008836.1"/>
</dbReference>
<dbReference type="SMR" id="A2SAC9"/>
<dbReference type="GeneID" id="93059470"/>
<dbReference type="KEGG" id="bml:BMA10229_A2954"/>
<dbReference type="HOGENOM" id="CLU_013386_1_0_4"/>
<dbReference type="UniPathway" id="UPA00664"/>
<dbReference type="Proteomes" id="UP000002283">
    <property type="component" value="Chromosome I"/>
</dbReference>
<dbReference type="GO" id="GO:0005886">
    <property type="term" value="C:plasma membrane"/>
    <property type="evidence" value="ECO:0007669"/>
    <property type="project" value="UniProtKB-SubCell"/>
</dbReference>
<dbReference type="GO" id="GO:0008961">
    <property type="term" value="F:phosphatidylglycerol-prolipoprotein diacylglyceryl transferase activity"/>
    <property type="evidence" value="ECO:0007669"/>
    <property type="project" value="UniProtKB-UniRule"/>
</dbReference>
<dbReference type="GO" id="GO:0042158">
    <property type="term" value="P:lipoprotein biosynthetic process"/>
    <property type="evidence" value="ECO:0007669"/>
    <property type="project" value="UniProtKB-UniRule"/>
</dbReference>
<dbReference type="HAMAP" id="MF_01147">
    <property type="entry name" value="Lgt"/>
    <property type="match status" value="1"/>
</dbReference>
<dbReference type="InterPro" id="IPR001640">
    <property type="entry name" value="Lgt"/>
</dbReference>
<dbReference type="NCBIfam" id="TIGR00544">
    <property type="entry name" value="lgt"/>
    <property type="match status" value="1"/>
</dbReference>
<dbReference type="PANTHER" id="PTHR30589:SF0">
    <property type="entry name" value="PHOSPHATIDYLGLYCEROL--PROLIPOPROTEIN DIACYLGLYCERYL TRANSFERASE"/>
    <property type="match status" value="1"/>
</dbReference>
<dbReference type="PANTHER" id="PTHR30589">
    <property type="entry name" value="PROLIPOPROTEIN DIACYLGLYCERYL TRANSFERASE"/>
    <property type="match status" value="1"/>
</dbReference>
<dbReference type="Pfam" id="PF01790">
    <property type="entry name" value="LGT"/>
    <property type="match status" value="1"/>
</dbReference>
<dbReference type="PROSITE" id="PS01311">
    <property type="entry name" value="LGT"/>
    <property type="match status" value="1"/>
</dbReference>
<accession>A2SAC9</accession>
<organism>
    <name type="scientific">Burkholderia mallei (strain NCTC 10229)</name>
    <dbReference type="NCBI Taxonomy" id="412022"/>
    <lineage>
        <taxon>Bacteria</taxon>
        <taxon>Pseudomonadati</taxon>
        <taxon>Pseudomonadota</taxon>
        <taxon>Betaproteobacteria</taxon>
        <taxon>Burkholderiales</taxon>
        <taxon>Burkholderiaceae</taxon>
        <taxon>Burkholderia</taxon>
        <taxon>pseudomallei group</taxon>
    </lineage>
</organism>
<protein>
    <recommendedName>
        <fullName evidence="1">Phosphatidylglycerol--prolipoprotein diacylglyceryl transferase</fullName>
        <ecNumber evidence="1">2.5.1.145</ecNumber>
    </recommendedName>
</protein>
<gene>
    <name evidence="1" type="primary">lgt</name>
    <name type="ordered locus">BMA10229_A2954</name>
</gene>